<protein>
    <recommendedName>
        <fullName evidence="13">Cysteine proteinase 2</fullName>
        <shortName evidence="13">EhCP2</shortName>
        <ecNumber evidence="6 9 14">3.4.22.35</ecNumber>
    </recommendedName>
    <alternativeName>
        <fullName evidence="11">Histolysain</fullName>
    </alternativeName>
    <alternativeName>
        <fullName evidence="11">Histolysin</fullName>
    </alternativeName>
</protein>
<organism>
    <name type="scientific">Entamoeba histolytica (strain ATCC 30459 / HM-1:IMSS / ABRM)</name>
    <dbReference type="NCBI Taxonomy" id="294381"/>
    <lineage>
        <taxon>Eukaryota</taxon>
        <taxon>Amoebozoa</taxon>
        <taxon>Evosea</taxon>
        <taxon>Archamoebae</taxon>
        <taxon>Mastigamoebida</taxon>
        <taxon>Entamoebidae</taxon>
        <taxon>Entamoeba</taxon>
    </lineage>
</organism>
<feature type="signal peptide" evidence="2">
    <location>
        <begin position="1"/>
        <end position="13"/>
    </location>
</feature>
<feature type="propeptide" id="PRO_0000026178" description="Activation peptide" evidence="10">
    <location>
        <begin position="14"/>
        <end position="93"/>
    </location>
</feature>
<feature type="chain" id="PRO_0000026179" description="Cysteine proteinase 2">
    <location>
        <begin position="94"/>
        <end position="315"/>
    </location>
</feature>
<feature type="active site" evidence="3">
    <location>
        <position position="118"/>
    </location>
</feature>
<feature type="active site" evidence="4">
    <location>
        <position position="259"/>
    </location>
</feature>
<feature type="active site" evidence="5">
    <location>
        <position position="279"/>
    </location>
</feature>
<feature type="disulfide bond" evidence="1">
    <location>
        <begin position="115"/>
        <end position="161"/>
    </location>
</feature>
<feature type="disulfide bond" evidence="1">
    <location>
        <begin position="152"/>
        <end position="193"/>
    </location>
</feature>
<feature type="sequence variant" evidence="8">
    <original>MFAFICLLAIAS</original>
    <variation>LAIAN</variation>
    <location>
        <begin position="1"/>
        <end position="12"/>
    </location>
</feature>
<feature type="sequence variant" evidence="8">
    <original>SK</original>
    <variation>AN</variation>
    <location>
        <begin position="21"/>
        <end position="22"/>
    </location>
</feature>
<feature type="sequence variant" evidence="8">
    <original>IEK</original>
    <variation>VEA</variation>
    <location>
        <begin position="30"/>
        <end position="32"/>
    </location>
</feature>
<feature type="sequence variant" evidence="8">
    <original>KFVDSFNKI</original>
    <variation>RFVAEFNKK</variation>
    <location>
        <begin position="44"/>
        <end position="52"/>
    </location>
</feature>
<feature type="sequence variant" evidence="8">
    <original>T</original>
    <variation>V</variation>
    <location>
        <position position="81"/>
    </location>
</feature>
<feature type="sequence variant" evidence="8">
    <original>QVK</original>
    <variation>KVT</variation>
    <location>
        <begin position="86"/>
        <end position="88"/>
    </location>
</feature>
<feature type="sequence variant" evidence="8">
    <original>KE</original>
    <variation>AQ</variation>
    <location>
        <begin position="102"/>
        <end position="103"/>
    </location>
</feature>
<feature type="sequence variant" evidence="8">
    <original>D</original>
    <variation>N</variation>
    <location>
        <position position="138"/>
    </location>
</feature>
<feature type="sequence conflict" description="In Ref. 5; AAB26210." evidence="13" ref="5">
    <original>I</original>
    <variation>L</variation>
    <location>
        <position position="109"/>
    </location>
</feature>
<feature type="sequence conflict" description="In Ref. 1; AAA29092." evidence="13" ref="1">
    <original>M</original>
    <variation>L</variation>
    <location>
        <position position="149"/>
    </location>
</feature>
<feature type="sequence conflict" description="In Ref. 5; AAB26210." evidence="13" ref="5">
    <location>
        <position position="150"/>
    </location>
</feature>
<feature type="sequence conflict" description="In Ref. 1; AAA29092." evidence="13" ref="1">
    <original>EH</original>
    <variation>QN</variation>
    <location>
        <begin position="175"/>
        <end position="176"/>
    </location>
</feature>
<feature type="sequence conflict" description="In Ref. 1; AAA29092." evidence="13" ref="1">
    <original>S</original>
    <variation>T</variation>
    <location>
        <position position="189"/>
    </location>
</feature>
<feature type="sequence conflict" description="In Ref. 1; AAA29092." evidence="13" ref="1">
    <original>S</original>
    <variation>A</variation>
    <location>
        <position position="199"/>
    </location>
</feature>
<feature type="sequence conflict" description="In Ref. 5; AAB26210." evidence="13" ref="5">
    <original>A</original>
    <variation>R</variation>
    <location>
        <position position="201"/>
    </location>
</feature>
<feature type="sequence conflict" description="In Ref. 1; AAA29092." evidence="13" ref="1">
    <original>T</original>
    <variation>N</variation>
    <location>
        <position position="207"/>
    </location>
</feature>
<feature type="sequence conflict" description="In Ref. 5; AAB26210." evidence="13" ref="5">
    <original>V</original>
    <variation>L</variation>
    <location>
        <position position="226"/>
    </location>
</feature>
<feature type="sequence conflict" description="In Ref. 5; AAB26210." evidence="13" ref="5">
    <original>A</original>
    <variation>V</variation>
    <location>
        <position position="232"/>
    </location>
</feature>
<feature type="sequence conflict" description="In Ref. 1; AAA29092." evidence="13" ref="1">
    <original>T</original>
    <variation>S</variation>
    <location>
        <position position="246"/>
    </location>
</feature>
<feature type="sequence conflict" description="In Ref. 1; AAA29092." evidence="13" ref="1">
    <original>Y</original>
    <variation>F</variation>
    <location>
        <position position="254"/>
    </location>
</feature>
<feature type="sequence conflict" description="In Ref. 5; AAB26210." evidence="13" ref="5">
    <original>G</original>
    <variation>S</variation>
    <location>
        <position position="284"/>
    </location>
</feature>
<dbReference type="EC" id="3.4.22.35" evidence="6 9 14"/>
<dbReference type="EMBL" id="M64721">
    <property type="protein sequence ID" value="AAA29092.1"/>
    <property type="molecule type" value="mRNA"/>
</dbReference>
<dbReference type="EMBL" id="M94163">
    <property type="protein sequence ID" value="AAA29091.1"/>
    <property type="molecule type" value="Genomic_DNA"/>
</dbReference>
<dbReference type="EMBL" id="DS571252">
    <property type="protein sequence ID" value="EAL45256.1"/>
    <property type="molecule type" value="Genomic_DNA"/>
</dbReference>
<dbReference type="EMBL" id="S58670">
    <property type="protein sequence ID" value="AAB26210.1"/>
    <property type="molecule type" value="Genomic_DNA"/>
</dbReference>
<dbReference type="RefSeq" id="XP_650642.1">
    <property type="nucleotide sequence ID" value="XM_645550.2"/>
</dbReference>
<dbReference type="SMR" id="Q01958"/>
<dbReference type="FunCoup" id="Q01958">
    <property type="interactions" value="47"/>
</dbReference>
<dbReference type="STRING" id="5759.Q01958"/>
<dbReference type="MEROPS" id="C01.050"/>
<dbReference type="EnsemblProtists" id="rna_EHI_033710-1">
    <property type="protein sequence ID" value="rna_EHI_033710-1"/>
    <property type="gene ID" value="EHI_033710"/>
</dbReference>
<dbReference type="GeneID" id="3404954"/>
<dbReference type="KEGG" id="ehi:EHI_033710"/>
<dbReference type="VEuPathDB" id="AmoebaDB:EHI5A_081530"/>
<dbReference type="VEuPathDB" id="AmoebaDB:EHI7A_106950"/>
<dbReference type="VEuPathDB" id="AmoebaDB:EHI8A_050360"/>
<dbReference type="VEuPathDB" id="AmoebaDB:EHI_033710"/>
<dbReference type="VEuPathDB" id="AmoebaDB:KM1_098010"/>
<dbReference type="eggNOG" id="KOG1543">
    <property type="taxonomic scope" value="Eukaryota"/>
</dbReference>
<dbReference type="InParanoid" id="Q01958"/>
<dbReference type="OMA" id="KSNPNQM"/>
<dbReference type="OrthoDB" id="10259130at2759"/>
<dbReference type="BRENDA" id="3.4.22.35">
    <property type="organism ID" value="2080"/>
</dbReference>
<dbReference type="Proteomes" id="UP000001926">
    <property type="component" value="Partially assembled WGS sequence"/>
</dbReference>
<dbReference type="GO" id="GO:0005615">
    <property type="term" value="C:extracellular space"/>
    <property type="evidence" value="ECO:0000318"/>
    <property type="project" value="GO_Central"/>
</dbReference>
<dbReference type="GO" id="GO:0005764">
    <property type="term" value="C:lysosome"/>
    <property type="evidence" value="ECO:0000318"/>
    <property type="project" value="GO_Central"/>
</dbReference>
<dbReference type="GO" id="GO:0045335">
    <property type="term" value="C:phagocytic vesicle"/>
    <property type="evidence" value="ECO:0007669"/>
    <property type="project" value="UniProtKB-SubCell"/>
</dbReference>
<dbReference type="GO" id="GO:0005886">
    <property type="term" value="C:plasma membrane"/>
    <property type="evidence" value="ECO:0007669"/>
    <property type="project" value="UniProtKB-SubCell"/>
</dbReference>
<dbReference type="GO" id="GO:0004197">
    <property type="term" value="F:cysteine-type endopeptidase activity"/>
    <property type="evidence" value="ECO:0000314"/>
    <property type="project" value="UniProtKB"/>
</dbReference>
<dbReference type="GO" id="GO:0006955">
    <property type="term" value="P:immune response"/>
    <property type="evidence" value="ECO:0000318"/>
    <property type="project" value="GO_Central"/>
</dbReference>
<dbReference type="GO" id="GO:2001235">
    <property type="term" value="P:positive regulation of apoptotic signaling pathway"/>
    <property type="evidence" value="ECO:0000318"/>
    <property type="project" value="GO_Central"/>
</dbReference>
<dbReference type="GO" id="GO:0051603">
    <property type="term" value="P:proteolysis involved in protein catabolic process"/>
    <property type="evidence" value="ECO:0000318"/>
    <property type="project" value="GO_Central"/>
</dbReference>
<dbReference type="CDD" id="cd02248">
    <property type="entry name" value="Peptidase_C1A"/>
    <property type="match status" value="1"/>
</dbReference>
<dbReference type="FunFam" id="3.90.70.10:FF:000039">
    <property type="entry name" value="Cysteine proteinase 2, putative"/>
    <property type="match status" value="1"/>
</dbReference>
<dbReference type="Gene3D" id="3.90.70.10">
    <property type="entry name" value="Cysteine proteinases"/>
    <property type="match status" value="1"/>
</dbReference>
<dbReference type="InterPro" id="IPR038765">
    <property type="entry name" value="Papain-like_cys_pep_sf"/>
</dbReference>
<dbReference type="InterPro" id="IPR025661">
    <property type="entry name" value="Pept_asp_AS"/>
</dbReference>
<dbReference type="InterPro" id="IPR000169">
    <property type="entry name" value="Pept_cys_AS"/>
</dbReference>
<dbReference type="InterPro" id="IPR025660">
    <property type="entry name" value="Pept_his_AS"/>
</dbReference>
<dbReference type="InterPro" id="IPR013128">
    <property type="entry name" value="Peptidase_C1A"/>
</dbReference>
<dbReference type="InterPro" id="IPR000668">
    <property type="entry name" value="Peptidase_C1A_C"/>
</dbReference>
<dbReference type="InterPro" id="IPR039417">
    <property type="entry name" value="Peptidase_C1A_papain-like"/>
</dbReference>
<dbReference type="InterPro" id="IPR013201">
    <property type="entry name" value="Prot_inhib_I29"/>
</dbReference>
<dbReference type="PANTHER" id="PTHR12411">
    <property type="entry name" value="CYSTEINE PROTEASE FAMILY C1-RELATED"/>
    <property type="match status" value="1"/>
</dbReference>
<dbReference type="Pfam" id="PF08246">
    <property type="entry name" value="Inhibitor_I29"/>
    <property type="match status" value="1"/>
</dbReference>
<dbReference type="Pfam" id="PF00112">
    <property type="entry name" value="Peptidase_C1"/>
    <property type="match status" value="1"/>
</dbReference>
<dbReference type="PRINTS" id="PR00705">
    <property type="entry name" value="PAPAIN"/>
</dbReference>
<dbReference type="SMART" id="SM00848">
    <property type="entry name" value="Inhibitor_I29"/>
    <property type="match status" value="1"/>
</dbReference>
<dbReference type="SMART" id="SM00645">
    <property type="entry name" value="Pept_C1"/>
    <property type="match status" value="1"/>
</dbReference>
<dbReference type="SUPFAM" id="SSF54001">
    <property type="entry name" value="Cysteine proteinases"/>
    <property type="match status" value="1"/>
</dbReference>
<dbReference type="PROSITE" id="PS00640">
    <property type="entry name" value="THIOL_PROTEASE_ASN"/>
    <property type="match status" value="1"/>
</dbReference>
<dbReference type="PROSITE" id="PS00139">
    <property type="entry name" value="THIOL_PROTEASE_CYS"/>
    <property type="match status" value="1"/>
</dbReference>
<dbReference type="PROSITE" id="PS00639">
    <property type="entry name" value="THIOL_PROTEASE_HIS"/>
    <property type="match status" value="1"/>
</dbReference>
<comment type="function">
    <text evidence="9">Cysteine protease which degrades matrix proteins such as collagen, laminin and fibronectin and thus is involved in the destruction of human tissue (PubMed:2898937). Can abolish adhesion (PubMed:2898937). May play an important role in pathogenicity (PubMed:2898937).</text>
</comment>
<comment type="catalytic activity">
    <reaction evidence="6 9 14">
        <text>Hydrolysis of proteins, including basement membrane collagen and azocasein. Preferential cleavage: Arg-Arg-|-Xaa in small molecule substrates including Z-Arg-Arg-|-NHMec.</text>
        <dbReference type="EC" id="3.4.22.35"/>
    </reaction>
</comment>
<comment type="activity regulation">
    <text evidence="7 9">Inhibited by cysteine protease inhibitors ICP1 and ICP2 (PubMed:16979632). Inhibited by leupeptin and such inhibitors of cysteine proteinases as L-transepoxysuccinyl-L-leucylamido-(4-guanidino)butane, peptidyldiazomethanes, iodoacetic acid and chicken cystatin.</text>
</comment>
<comment type="biophysicochemical properties">
    <kinetics>
        <KM evidence="9">1.5 uM for Z-Arg-Arg-NHMec</KM>
        <KM evidence="9">31.8 uM for Z-Phe-Arg-NHMec</KM>
        <text>kcat is 130 sec(-1) with Z-Arg-Arg-NHMec as substrate and 0.4 sec(-1) with Z-Phe-Arg-NHMec as substrate.</text>
    </kinetics>
    <phDependence>
        <text evidence="9">Optimum pH is 5.5 with azocasein as substrate, 7 with Z-Phe-Cit-NHMec, and 9.5 with Z-Phe-Arg-NHMec and Z-Arg-Arg-NHMec as substrate.</text>
    </phDependence>
</comment>
<comment type="subunit">
    <text evidence="7">Interacts with cysteine protease inhibitor ICP1 (PubMed:16979632). Interacts with cysteine protease inhibitor ICP2 (PubMed:16979632).</text>
</comment>
<comment type="subcellular location">
    <subcellularLocation>
        <location evidence="6">Cell membrane</location>
        <topology evidence="6">Peripheral membrane protein</topology>
        <orientation evidence="6">Extracellular side</orientation>
    </subcellularLocation>
    <subcellularLocation>
        <location evidence="6">Cytoplasmic vesicle</location>
        <location evidence="6">Phagosome</location>
    </subcellularLocation>
    <subcellularLocation>
        <location evidence="7">Secreted</location>
    </subcellularLocation>
    <text evidence="6">During phagocytosis, localizes to phagocytic vesicles.</text>
</comment>
<comment type="developmental stage">
    <text evidence="6 7">Expressed in trophozoites (at protein level).</text>
</comment>
<comment type="similarity">
    <text evidence="3 4 5">Belongs to the peptidase C1 family.</text>
</comment>
<accession>Q01958</accession>
<accession>C4M434</accession>
<accession>P36185</accession>
<accession>Q06964</accession>
<name>CPP2_ENTH1</name>
<evidence type="ECO:0000250" key="1">
    <source>
        <dbReference type="UniProtKB" id="P07711"/>
    </source>
</evidence>
<evidence type="ECO:0000255" key="2"/>
<evidence type="ECO:0000255" key="3">
    <source>
        <dbReference type="PROSITE-ProRule" id="PRU10088"/>
    </source>
</evidence>
<evidence type="ECO:0000255" key="4">
    <source>
        <dbReference type="PROSITE-ProRule" id="PRU10089"/>
    </source>
</evidence>
<evidence type="ECO:0000255" key="5">
    <source>
        <dbReference type="PROSITE-ProRule" id="PRU10090"/>
    </source>
</evidence>
<evidence type="ECO:0000269" key="6">
    <source>
    </source>
</evidence>
<evidence type="ECO:0000269" key="7">
    <source>
    </source>
</evidence>
<evidence type="ECO:0000269" key="8">
    <source>
    </source>
</evidence>
<evidence type="ECO:0000269" key="9">
    <source>
    </source>
</evidence>
<evidence type="ECO:0000269" key="10">
    <source>
    </source>
</evidence>
<evidence type="ECO:0000303" key="11">
    <source>
    </source>
</evidence>
<evidence type="ECO:0000303" key="12">
    <source>
    </source>
</evidence>
<evidence type="ECO:0000305" key="13"/>
<evidence type="ECO:0000305" key="14">
    <source>
    </source>
</evidence>
<evidence type="ECO:0000312" key="15">
    <source>
        <dbReference type="EMBL" id="AAA29092.1"/>
    </source>
</evidence>
<evidence type="ECO:0000312" key="16">
    <source>
        <dbReference type="EMBL" id="AAB26210.1"/>
    </source>
</evidence>
<keyword id="KW-1003">Cell membrane</keyword>
<keyword id="KW-0968">Cytoplasmic vesicle</keyword>
<keyword id="KW-0903">Direct protein sequencing</keyword>
<keyword id="KW-1015">Disulfide bond</keyword>
<keyword id="KW-0378">Hydrolase</keyword>
<keyword id="KW-0472">Membrane</keyword>
<keyword id="KW-0645">Protease</keyword>
<keyword id="KW-1185">Reference proteome</keyword>
<keyword id="KW-0964">Secreted</keyword>
<keyword id="KW-0732">Signal</keyword>
<keyword id="KW-0788">Thiol protease</keyword>
<keyword id="KW-0865">Zymogen</keyword>
<proteinExistence type="evidence at protein level"/>
<gene>
    <name evidence="13" type="primary">CP2</name>
    <name evidence="12" type="synonym">ACP2</name>
    <name evidence="13" type="synonym">CPP2</name>
    <name type="ORF">EHI_033710</name>
</gene>
<reference evidence="15" key="1">
    <citation type="journal article" date="1991" name="J. Biol. Chem.">
        <title>Homologous cysteine proteinases of pathogenic and nonpathogenic Entamoeba histolytica. Differences in structure and expression.</title>
        <authorList>
            <person name="Tannich E."/>
            <person name="Scholze H."/>
            <person name="Nicke R."/>
            <person name="Horstmann R.D."/>
        </authorList>
    </citation>
    <scope>NUCLEOTIDE SEQUENCE [MRNA]</scope>
    <scope>VARIANTS 1-MET--SER-12 DELINS LEU-ALA-ILE-ALA-ASN; 21-SER-LYS-22 DELINS ALA-ASN; 30-ILE--LYS-32 DELINS VAL-GLU-ALA; 44-LYS--ILE-52 DELINS ARG-PHE-VAL-ALA-GLU-PHE-ASN-LYS-LYS; VAL-81; 86-GLN--LYS-88 DELINS LYS-VAL-THR; 102-LYS-GLU-103 DELINS ALA-GLN AND ASN-138</scope>
    <source>
        <strain evidence="15">SAW 1734</strain>
    </source>
</reference>
<reference key="2">
    <citation type="journal article" date="1992" name="Mol. Biochem. Parasitol.">
        <title>Mapping and partial sequencing of the genes coding for two different cysteine proteinases in pathogenic Entamoeba histolytica.</title>
        <authorList>
            <person name="Tannich E."/>
            <person name="Nickel R."/>
            <person name="Buss H."/>
            <person name="Horstmann R.D."/>
        </authorList>
    </citation>
    <scope>NUCLEOTIDE SEQUENCE [GENOMIC DNA]</scope>
    <scope>PARTIAL PROTEIN SEQUENCE</scope>
    <source>
        <strain>ATCC 30459 / HM-1:IMSS / ABRM</strain>
    </source>
</reference>
<reference key="3">
    <citation type="journal article" date="2005" name="Nature">
        <title>The genome of the protist parasite Entamoeba histolytica.</title>
        <authorList>
            <person name="Loftus B.J."/>
            <person name="Anderson I."/>
            <person name="Davies R."/>
            <person name="Alsmark U.C."/>
            <person name="Samuelson J."/>
            <person name="Amedeo P."/>
            <person name="Roncaglia P."/>
            <person name="Berriman M."/>
            <person name="Hirt R.P."/>
            <person name="Mann B.J."/>
            <person name="Nozaki T."/>
            <person name="Suh B."/>
            <person name="Pop M."/>
            <person name="Duchene M."/>
            <person name="Ackers J."/>
            <person name="Tannich E."/>
            <person name="Leippe M."/>
            <person name="Hofer M."/>
            <person name="Bruchhaus I."/>
            <person name="Willhoeft U."/>
            <person name="Bhattacharya A."/>
            <person name="Chillingworth T."/>
            <person name="Churcher C.M."/>
            <person name="Hance Z."/>
            <person name="Harris B."/>
            <person name="Harris D."/>
            <person name="Jagels K."/>
            <person name="Moule S."/>
            <person name="Mungall K.L."/>
            <person name="Ormond D."/>
            <person name="Squares R."/>
            <person name="Whitehead S."/>
            <person name="Quail M.A."/>
            <person name="Rabbinowitsch E."/>
            <person name="Norbertczak H."/>
            <person name="Price C."/>
            <person name="Wang Z."/>
            <person name="Guillen N."/>
            <person name="Gilchrist C."/>
            <person name="Stroup S.E."/>
            <person name="Bhattacharya S."/>
            <person name="Lohia A."/>
            <person name="Foster P.G."/>
            <person name="Sicheritz-Ponten T."/>
            <person name="Weber C."/>
            <person name="Singh U."/>
            <person name="Mukherjee C."/>
            <person name="El-Sayed N.M.A."/>
            <person name="Petri W.A."/>
            <person name="Clark C.G."/>
            <person name="Embley T.M."/>
            <person name="Barrell B.G."/>
            <person name="Fraser C.M."/>
            <person name="Hall N."/>
        </authorList>
    </citation>
    <scope>NUCLEOTIDE SEQUENCE [LARGE SCALE GENOMIC DNA]</scope>
    <source>
        <strain>ATCC 30459 / HM-1:IMSS / ABRM</strain>
    </source>
</reference>
<reference key="4">
    <citation type="journal article" date="2010" name="PLoS Negl. Trop. Dis.">
        <title>New assembly, reannotation and analysis of the Entamoeba histolytica genome reveal new genomic features and protein content information.</title>
        <authorList>
            <person name="Lorenzi H.A."/>
            <person name="Puiu D."/>
            <person name="Miller J.R."/>
            <person name="Brinkac L.M."/>
            <person name="Amedeo P."/>
            <person name="Hall N."/>
            <person name="Caler E.V."/>
        </authorList>
    </citation>
    <scope>GENOME REANNOTATION</scope>
    <source>
        <strain>ATCC 30459 / HM-1:IMSS / ABRM</strain>
    </source>
</reference>
<reference evidence="16" key="5">
    <citation type="journal article" date="1993" name="J. Clin. Invest.">
        <title>Cloning of a virulence factor of Entamoeba histolytica. Pathogenic strains possess a unique cysteine proteinase gene.</title>
        <authorList>
            <person name="Reed S."/>
            <person name="Bouvier J."/>
            <person name="Pollack A.S."/>
            <person name="Engel J.C."/>
            <person name="Brown M."/>
            <person name="Hirata K."/>
            <person name="Que X."/>
            <person name="Eakin A."/>
            <person name="Hagblom P."/>
            <person name="Gillin F."/>
            <person name="McKerrow J.H."/>
        </authorList>
    </citation>
    <scope>NUCLEOTIDE SEQUENCE [GENOMIC DNA] OF 5-314</scope>
    <scope>PROTEIN SEQUENCE OF 90-97</scope>
    <source>
        <strain evidence="16">ATCC 30459 / HM-1:IMSS / ABRM</strain>
    </source>
</reference>
<reference key="6">
    <citation type="journal article" date="1988" name="Biochem. J.">
        <title>Affinity purification and biochemical characterization of histolysin, the major cysteine proteinase of Entamoeba histolytica.</title>
        <authorList>
            <person name="Luaces A.L."/>
            <person name="Barrett A.J."/>
        </authorList>
    </citation>
    <scope>PARTIAL PROTEIN SEQUENCE</scope>
    <scope>FUNCTION</scope>
    <scope>CATALYTIC ACTIVITY</scope>
    <scope>BIOPHYSICOCHEMICAL PROPERTIES</scope>
    <scope>ACTIVITY REGULATION</scope>
    <source>
        <strain>ATCC 30459 / HM-1:IMSS / ABRM</strain>
    </source>
</reference>
<reference key="7">
    <citation type="journal article" date="2002" name="Mol. Biochem. Parasitol.">
        <title>Cysteine proteinases from distinct cellular compartments are recruited to phagocytic vesicles by Entamoeba histolytica.</title>
        <authorList>
            <person name="Que X."/>
            <person name="Brinen L.S."/>
            <person name="Perkins P."/>
            <person name="Herdman S."/>
            <person name="Hirata K."/>
            <person name="Torian B.E."/>
            <person name="Rubin H."/>
            <person name="McKerrow J.H."/>
            <person name="Reed S.L."/>
        </authorList>
    </citation>
    <scope>CATALYTIC ACTIVITY</scope>
    <scope>SUBCELLULAR LOCATION</scope>
    <scope>DEVELOPMENTAL STAGE</scope>
</reference>
<reference key="8">
    <citation type="journal article" date="2006" name="FEBS Lett.">
        <title>Two cysteine protease inhibitors, EhICP1 and 2, localized in distinct compartments, negatively regulate secretion in Entamoeba histolytica.</title>
        <authorList>
            <person name="Sato D."/>
            <person name="Nakada-Tsukui K."/>
            <person name="Okada M."/>
            <person name="Nozaki T."/>
        </authorList>
    </citation>
    <scope>CATALYTIC ACTIVITY</scope>
    <scope>ACTIVITY REGULATION</scope>
    <scope>INTERACTION WITH ICP1 AND ICP2</scope>
    <scope>SUBCELLULAR LOCATION</scope>
    <scope>DEVELOPMENTAL STAGE</scope>
</reference>
<sequence>MFAFICLLAIASAIDFNTWASKNNKHFTAIEKLRRRAIFNMNAKFVDSFNKIGSFKLSVDGPFAAMTNEEYRTLLKSKRTTEENGQVKYLNIQAPESVDWRKEGKVTPIRDQAQCGSCYTFGSLAALEGRLLIEKGGDANTLDLSEEHMVQCTRDNGNNGCNGGLGSNVYDYIIEHGVAKESDYPYTGSDSTCKTNVKSFAKITGYTKVPRNNEAELKAALSQGLVDVSIDASSAKFQLYKSGAYTDTKCKNNYFALNHEVCAVGYGVVDGKECWIVRNSWGTGWGDKGYINMVIEGNTCGVATDPLYPTGVQYL</sequence>